<comment type="similarity">
    <text evidence="1">Belongs to the bacterial ribosomal protein bL27 family.</text>
</comment>
<protein>
    <recommendedName>
        <fullName evidence="1">Large ribosomal subunit protein bL27</fullName>
    </recommendedName>
    <alternativeName>
        <fullName evidence="3">50S ribosomal protein L27</fullName>
    </alternativeName>
</protein>
<keyword id="KW-0687">Ribonucleoprotein</keyword>
<keyword id="KW-0689">Ribosomal protein</keyword>
<gene>
    <name evidence="1" type="primary">rpmA</name>
    <name type="ordered locus">SGR_4954</name>
</gene>
<evidence type="ECO:0000255" key="1">
    <source>
        <dbReference type="HAMAP-Rule" id="MF_00539"/>
    </source>
</evidence>
<evidence type="ECO:0000256" key="2">
    <source>
        <dbReference type="SAM" id="MobiDB-lite"/>
    </source>
</evidence>
<evidence type="ECO:0000305" key="3"/>
<reference key="1">
    <citation type="journal article" date="2008" name="J. Bacteriol.">
        <title>Genome sequence of the streptomycin-producing microorganism Streptomyces griseus IFO 13350.</title>
        <authorList>
            <person name="Ohnishi Y."/>
            <person name="Ishikawa J."/>
            <person name="Hara H."/>
            <person name="Suzuki H."/>
            <person name="Ikenoya M."/>
            <person name="Ikeda H."/>
            <person name="Yamashita A."/>
            <person name="Hattori M."/>
            <person name="Horinouchi S."/>
        </authorList>
    </citation>
    <scope>NUCLEOTIDE SEQUENCE [LARGE SCALE GENOMIC DNA]</scope>
    <source>
        <strain>JCM 4626 / CBS 651.72 / NBRC 13350 / KCC S-0626 / ISP 5235</strain>
    </source>
</reference>
<feature type="chain" id="PRO_1000128811" description="Large ribosomal subunit protein bL27">
    <location>
        <begin position="1"/>
        <end position="85"/>
    </location>
</feature>
<feature type="region of interest" description="Disordered" evidence="2">
    <location>
        <begin position="1"/>
        <end position="22"/>
    </location>
</feature>
<feature type="compositionally biased region" description="Polar residues" evidence="2">
    <location>
        <begin position="7"/>
        <end position="19"/>
    </location>
</feature>
<sequence length="85" mass="8860">MAHKKGASSTRNGRDSNAQRLGVKRFGGQAVNAGEILVRQRGTHFHPGTGVGRGGDDTLFALAAGAVQFGTHRGRKVVNIVPLAV</sequence>
<dbReference type="EMBL" id="AP009493">
    <property type="protein sequence ID" value="BAG21783.1"/>
    <property type="molecule type" value="Genomic_DNA"/>
</dbReference>
<dbReference type="RefSeq" id="WP_003969205.1">
    <property type="nucleotide sequence ID" value="NC_010572.1"/>
</dbReference>
<dbReference type="SMR" id="B1VXD7"/>
<dbReference type="KEGG" id="sgr:SGR_4954"/>
<dbReference type="eggNOG" id="COG0211">
    <property type="taxonomic scope" value="Bacteria"/>
</dbReference>
<dbReference type="HOGENOM" id="CLU_095424_4_0_11"/>
<dbReference type="Proteomes" id="UP000001685">
    <property type="component" value="Chromosome"/>
</dbReference>
<dbReference type="GO" id="GO:0022625">
    <property type="term" value="C:cytosolic large ribosomal subunit"/>
    <property type="evidence" value="ECO:0007669"/>
    <property type="project" value="TreeGrafter"/>
</dbReference>
<dbReference type="GO" id="GO:0003735">
    <property type="term" value="F:structural constituent of ribosome"/>
    <property type="evidence" value="ECO:0007669"/>
    <property type="project" value="InterPro"/>
</dbReference>
<dbReference type="GO" id="GO:0006412">
    <property type="term" value="P:translation"/>
    <property type="evidence" value="ECO:0007669"/>
    <property type="project" value="UniProtKB-UniRule"/>
</dbReference>
<dbReference type="FunFam" id="2.40.50.100:FF:000020">
    <property type="entry name" value="50S ribosomal protein L27"/>
    <property type="match status" value="1"/>
</dbReference>
<dbReference type="Gene3D" id="2.40.50.100">
    <property type="match status" value="1"/>
</dbReference>
<dbReference type="HAMAP" id="MF_00539">
    <property type="entry name" value="Ribosomal_bL27"/>
    <property type="match status" value="1"/>
</dbReference>
<dbReference type="InterPro" id="IPR001684">
    <property type="entry name" value="Ribosomal_bL27"/>
</dbReference>
<dbReference type="InterPro" id="IPR018261">
    <property type="entry name" value="Ribosomal_bL27_CS"/>
</dbReference>
<dbReference type="NCBIfam" id="TIGR00062">
    <property type="entry name" value="L27"/>
    <property type="match status" value="1"/>
</dbReference>
<dbReference type="PANTHER" id="PTHR15893:SF0">
    <property type="entry name" value="LARGE RIBOSOMAL SUBUNIT PROTEIN BL27M"/>
    <property type="match status" value="1"/>
</dbReference>
<dbReference type="PANTHER" id="PTHR15893">
    <property type="entry name" value="RIBOSOMAL PROTEIN L27"/>
    <property type="match status" value="1"/>
</dbReference>
<dbReference type="Pfam" id="PF01016">
    <property type="entry name" value="Ribosomal_L27"/>
    <property type="match status" value="1"/>
</dbReference>
<dbReference type="PRINTS" id="PR00063">
    <property type="entry name" value="RIBOSOMALL27"/>
</dbReference>
<dbReference type="SUPFAM" id="SSF110324">
    <property type="entry name" value="Ribosomal L27 protein-like"/>
    <property type="match status" value="1"/>
</dbReference>
<dbReference type="PROSITE" id="PS00831">
    <property type="entry name" value="RIBOSOMAL_L27"/>
    <property type="match status" value="1"/>
</dbReference>
<proteinExistence type="inferred from homology"/>
<name>RL27_STRGG</name>
<organism>
    <name type="scientific">Streptomyces griseus subsp. griseus (strain JCM 4626 / CBS 651.72 / NBRC 13350 / KCC S-0626 / ISP 5235)</name>
    <dbReference type="NCBI Taxonomy" id="455632"/>
    <lineage>
        <taxon>Bacteria</taxon>
        <taxon>Bacillati</taxon>
        <taxon>Actinomycetota</taxon>
        <taxon>Actinomycetes</taxon>
        <taxon>Kitasatosporales</taxon>
        <taxon>Streptomycetaceae</taxon>
        <taxon>Streptomyces</taxon>
    </lineage>
</organism>
<accession>B1VXD7</accession>